<name>ARP10_PIG</name>
<keyword id="KW-0002">3D-structure</keyword>
<keyword id="KW-0963">Cytoplasm</keyword>
<keyword id="KW-0206">Cytoskeleton</keyword>
<keyword id="KW-1185">Reference proteome</keyword>
<dbReference type="EMBL" id="AEMK02000004">
    <property type="status" value="NOT_ANNOTATED_CDS"/>
    <property type="molecule type" value="Genomic_DNA"/>
</dbReference>
<dbReference type="EMBL" id="DQIR01031969">
    <property type="protein sequence ID" value="HCZ87444.1"/>
    <property type="molecule type" value="Transcribed_RNA"/>
</dbReference>
<dbReference type="EMBL" id="DQIR01127687">
    <property type="protein sequence ID" value="HDA83163.1"/>
    <property type="molecule type" value="Transcribed_RNA"/>
</dbReference>
<dbReference type="EMBL" id="DQIR01231574">
    <property type="protein sequence ID" value="HDB87051.1"/>
    <property type="molecule type" value="Transcribed_RNA"/>
</dbReference>
<dbReference type="EMBL" id="DQIR01271097">
    <property type="protein sequence ID" value="HDC26575.1"/>
    <property type="molecule type" value="Transcribed_RNA"/>
</dbReference>
<dbReference type="RefSeq" id="XP_003353540.1">
    <property type="nucleotide sequence ID" value="XM_003353492.4"/>
</dbReference>
<dbReference type="PDB" id="5ADX">
    <property type="method" value="EM"/>
    <property type="resolution" value="4.00 A"/>
    <property type="chains" value="J=1-417"/>
</dbReference>
<dbReference type="PDB" id="5AFU">
    <property type="method" value="EM"/>
    <property type="resolution" value="3.50 A"/>
    <property type="chains" value="J=12-390"/>
</dbReference>
<dbReference type="PDB" id="5NW4">
    <property type="method" value="EM"/>
    <property type="resolution" value="8.70 A"/>
    <property type="chains" value="X=1-417"/>
</dbReference>
<dbReference type="PDB" id="6F1T">
    <property type="method" value="EM"/>
    <property type="resolution" value="3.50 A"/>
    <property type="chains" value="J=1-390"/>
</dbReference>
<dbReference type="PDB" id="6F38">
    <property type="method" value="EM"/>
    <property type="resolution" value="6.70 A"/>
    <property type="chains" value="J=1-390"/>
</dbReference>
<dbReference type="PDB" id="6F3A">
    <property type="method" value="EM"/>
    <property type="resolution" value="8.20 A"/>
    <property type="chains" value="J=1-390"/>
</dbReference>
<dbReference type="PDB" id="6ZNL">
    <property type="method" value="EM"/>
    <property type="resolution" value="3.80 A"/>
    <property type="chains" value="J=1-417"/>
</dbReference>
<dbReference type="PDB" id="6ZNM">
    <property type="method" value="EM"/>
    <property type="resolution" value="4.10 A"/>
    <property type="chains" value="J=1-417"/>
</dbReference>
<dbReference type="PDB" id="6ZNN">
    <property type="method" value="EM"/>
    <property type="resolution" value="4.50 A"/>
    <property type="chains" value="J=1-417"/>
</dbReference>
<dbReference type="PDB" id="6ZNO">
    <property type="method" value="EM"/>
    <property type="resolution" value="6.80 A"/>
    <property type="chains" value="J=1-417"/>
</dbReference>
<dbReference type="PDB" id="6ZO4">
    <property type="method" value="EM"/>
    <property type="resolution" value="8.20 A"/>
    <property type="chains" value="J=1-417"/>
</dbReference>
<dbReference type="PDB" id="7Z8F">
    <property type="method" value="EM"/>
    <property type="resolution" value="20.00 A"/>
    <property type="chains" value="J=1-417"/>
</dbReference>
<dbReference type="PDB" id="7Z8M">
    <property type="method" value="EM"/>
    <property type="resolution" value="3.37 A"/>
    <property type="chains" value="J=1-417"/>
</dbReference>
<dbReference type="PDB" id="8PR4">
    <property type="method" value="EM"/>
    <property type="resolution" value="3.50 A"/>
    <property type="chains" value="J=1-417"/>
</dbReference>
<dbReference type="PDB" id="8PTK">
    <property type="method" value="EM"/>
    <property type="resolution" value="10.00 A"/>
    <property type="chains" value="J=1-417"/>
</dbReference>
<dbReference type="PDBsum" id="5ADX"/>
<dbReference type="PDBsum" id="5AFU"/>
<dbReference type="PDBsum" id="5NW4"/>
<dbReference type="PDBsum" id="6F1T"/>
<dbReference type="PDBsum" id="6F38"/>
<dbReference type="PDBsum" id="6F3A"/>
<dbReference type="PDBsum" id="6ZNL"/>
<dbReference type="PDBsum" id="6ZNM"/>
<dbReference type="PDBsum" id="6ZNN"/>
<dbReference type="PDBsum" id="6ZNO"/>
<dbReference type="PDBsum" id="6ZO4"/>
<dbReference type="PDBsum" id="7Z8F"/>
<dbReference type="PDBsum" id="7Z8M"/>
<dbReference type="PDBsum" id="8PR4"/>
<dbReference type="PDBsum" id="8PTK"/>
<dbReference type="EMDB" id="EMD-11313"/>
<dbReference type="EMDB" id="EMD-11317"/>
<dbReference type="EMDB" id="EMD-11318"/>
<dbReference type="EMDB" id="EMD-11319"/>
<dbReference type="EMDB" id="EMD-14549"/>
<dbReference type="EMDB" id="EMD-14559"/>
<dbReference type="EMDB" id="EMD-17834"/>
<dbReference type="EMDB" id="EMD-17873"/>
<dbReference type="EMDB" id="EMD-2856"/>
<dbReference type="EMDB" id="EMD-2857"/>
<dbReference type="EMDB" id="EMD-3706"/>
<dbReference type="EMDB" id="EMD-4168"/>
<dbReference type="EMDB" id="EMD-4177"/>
<dbReference type="SMR" id="I3LHK5"/>
<dbReference type="FunCoup" id="I3LHK5">
    <property type="interactions" value="1892"/>
</dbReference>
<dbReference type="STRING" id="9823.ENSSSCP00000023552"/>
<dbReference type="PaxDb" id="9823-ENSSSCP00000023552"/>
<dbReference type="PeptideAtlas" id="I3LHK5"/>
<dbReference type="PRIDE" id="I3LHK5"/>
<dbReference type="Ensembl" id="ENSSSCT00000030515.3">
    <property type="protein sequence ID" value="ENSSSCP00000023552.1"/>
    <property type="gene ID" value="ENSSSCG00000022299.3"/>
</dbReference>
<dbReference type="Ensembl" id="ENSSSCT00025077818.1">
    <property type="protein sequence ID" value="ENSSSCP00025033725.1"/>
    <property type="gene ID" value="ENSSSCG00025056881.1"/>
</dbReference>
<dbReference type="Ensembl" id="ENSSSCT00030069948.1">
    <property type="protein sequence ID" value="ENSSSCP00030031899.1"/>
    <property type="gene ID" value="ENSSSCG00030050188.1"/>
</dbReference>
<dbReference type="Ensembl" id="ENSSSCT00035084670.1">
    <property type="protein sequence ID" value="ENSSSCP00035035223.1"/>
    <property type="gene ID" value="ENSSSCG00035062990.1"/>
</dbReference>
<dbReference type="Ensembl" id="ENSSSCT00040093274.1">
    <property type="protein sequence ID" value="ENSSSCP00040041207.1"/>
    <property type="gene ID" value="ENSSSCG00040068143.1"/>
</dbReference>
<dbReference type="Ensembl" id="ENSSSCT00050032084.1">
    <property type="protein sequence ID" value="ENSSSCP00050013396.1"/>
    <property type="gene ID" value="ENSSSCG00050023791.1"/>
</dbReference>
<dbReference type="Ensembl" id="ENSSSCT00055027594.1">
    <property type="protein sequence ID" value="ENSSSCP00055021966.1"/>
    <property type="gene ID" value="ENSSSCG00055013991.1"/>
</dbReference>
<dbReference type="Ensembl" id="ENSSSCT00060057210.1">
    <property type="protein sequence ID" value="ENSSSCP00060024481.1"/>
    <property type="gene ID" value="ENSSSCG00060042196.1"/>
</dbReference>
<dbReference type="Ensembl" id="ENSSSCT00065078675.1">
    <property type="protein sequence ID" value="ENSSSCP00065034194.1"/>
    <property type="gene ID" value="ENSSSCG00065057489.1"/>
</dbReference>
<dbReference type="Ensembl" id="ENSSSCT00070061522.1">
    <property type="protein sequence ID" value="ENSSSCP00070052457.1"/>
    <property type="gene ID" value="ENSSSCG00070030559.1"/>
</dbReference>
<dbReference type="Ensembl" id="ENSSSCT00090055464">
    <property type="protein sequence ID" value="ENSSSCP00090034546"/>
    <property type="gene ID" value="ENSSSCG00090031359"/>
</dbReference>
<dbReference type="Ensembl" id="ENSSSCT00105031103">
    <property type="protein sequence ID" value="ENSSSCP00105021674"/>
    <property type="gene ID" value="ENSSSCG00105016222"/>
</dbReference>
<dbReference type="Ensembl" id="ENSSSCT00110012548">
    <property type="protein sequence ID" value="ENSSSCP00110008808"/>
    <property type="gene ID" value="ENSSSCG00110006425"/>
</dbReference>
<dbReference type="Ensembl" id="ENSSSCT00115016538">
    <property type="protein sequence ID" value="ENSSSCP00115015601"/>
    <property type="gene ID" value="ENSSSCG00115009615"/>
</dbReference>
<dbReference type="Ensembl" id="ENSSSCT00130061385">
    <property type="protein sequence ID" value="ENSSSCP00130043977"/>
    <property type="gene ID" value="ENSSSCG00130031441"/>
</dbReference>
<dbReference type="GeneID" id="100620619"/>
<dbReference type="KEGG" id="ssc:100620619"/>
<dbReference type="CTD" id="55860"/>
<dbReference type="VGNC" id="VGNC:85048">
    <property type="gene designation" value="ACTR10"/>
</dbReference>
<dbReference type="eggNOG" id="KOG0676">
    <property type="taxonomic scope" value="Eukaryota"/>
</dbReference>
<dbReference type="GeneTree" id="ENSGT00910000144250"/>
<dbReference type="HOGENOM" id="CLU_027965_2_1_1"/>
<dbReference type="InParanoid" id="I3LHK5"/>
<dbReference type="OMA" id="WERDNDN"/>
<dbReference type="OrthoDB" id="337660at2759"/>
<dbReference type="TreeFam" id="TF315151"/>
<dbReference type="Reactome" id="R-SSC-2132295">
    <property type="pathway name" value="MHC class II antigen presentation"/>
</dbReference>
<dbReference type="Reactome" id="R-SSC-3371497">
    <property type="pathway name" value="HSP90 chaperone cycle for steroid hormone receptors (SHR) in the presence of ligand"/>
</dbReference>
<dbReference type="Reactome" id="R-SSC-6798695">
    <property type="pathway name" value="Neutrophil degranulation"/>
</dbReference>
<dbReference type="Reactome" id="R-SSC-6807878">
    <property type="pathway name" value="COPI-mediated anterograde transport"/>
</dbReference>
<dbReference type="EvolutionaryTrace" id="I3LHK5"/>
<dbReference type="Proteomes" id="UP000008227">
    <property type="component" value="Chromosome 1"/>
</dbReference>
<dbReference type="Proteomes" id="UP000314985">
    <property type="component" value="Chromosome 1"/>
</dbReference>
<dbReference type="Proteomes" id="UP000694570">
    <property type="component" value="Unplaced"/>
</dbReference>
<dbReference type="Proteomes" id="UP000694571">
    <property type="component" value="Unplaced"/>
</dbReference>
<dbReference type="Proteomes" id="UP000694720">
    <property type="component" value="Unplaced"/>
</dbReference>
<dbReference type="Proteomes" id="UP000694722">
    <property type="component" value="Unplaced"/>
</dbReference>
<dbReference type="Proteomes" id="UP000694723">
    <property type="component" value="Unplaced"/>
</dbReference>
<dbReference type="Proteomes" id="UP000694724">
    <property type="component" value="Unplaced"/>
</dbReference>
<dbReference type="Proteomes" id="UP000694725">
    <property type="component" value="Unplaced"/>
</dbReference>
<dbReference type="Proteomes" id="UP000694726">
    <property type="component" value="Unplaced"/>
</dbReference>
<dbReference type="Proteomes" id="UP000694727">
    <property type="component" value="Unplaced"/>
</dbReference>
<dbReference type="Proteomes" id="UP000694728">
    <property type="component" value="Unplaced"/>
</dbReference>
<dbReference type="Bgee" id="ENSSSCG00000022299">
    <property type="expression patterns" value="Expressed in semimembranosus muscle and 45 other cell types or tissues"/>
</dbReference>
<dbReference type="ExpressionAtlas" id="I3LHK5">
    <property type="expression patterns" value="baseline"/>
</dbReference>
<dbReference type="GO" id="GO:1904115">
    <property type="term" value="C:axon cytoplasm"/>
    <property type="evidence" value="ECO:0007669"/>
    <property type="project" value="GOC"/>
</dbReference>
<dbReference type="GO" id="GO:0005869">
    <property type="term" value="C:dynactin complex"/>
    <property type="evidence" value="ECO:0000318"/>
    <property type="project" value="GO_Central"/>
</dbReference>
<dbReference type="GO" id="GO:0098958">
    <property type="term" value="P:retrograde axonal transport of mitochondrion"/>
    <property type="evidence" value="ECO:0000318"/>
    <property type="project" value="GO_Central"/>
</dbReference>
<dbReference type="CDD" id="cd10207">
    <property type="entry name" value="ASKHA_NBD_Arp10"/>
    <property type="match status" value="1"/>
</dbReference>
<dbReference type="FunFam" id="3.30.420.40:FF:000762">
    <property type="entry name" value="Actin-related protein 10"/>
    <property type="match status" value="1"/>
</dbReference>
<dbReference type="FunFam" id="3.30.420.40:FF:000075">
    <property type="entry name" value="Actin-related protein 10 homolog"/>
    <property type="match status" value="1"/>
</dbReference>
<dbReference type="FunFam" id="3.90.640.10:FF:000017">
    <property type="entry name" value="Actin-related protein 10 homolog"/>
    <property type="match status" value="1"/>
</dbReference>
<dbReference type="Gene3D" id="3.30.420.40">
    <property type="match status" value="2"/>
</dbReference>
<dbReference type="Gene3D" id="3.90.640.10">
    <property type="entry name" value="Actin, Chain A, domain 4"/>
    <property type="match status" value="1"/>
</dbReference>
<dbReference type="InterPro" id="IPR004000">
    <property type="entry name" value="Actin"/>
</dbReference>
<dbReference type="InterPro" id="IPR043129">
    <property type="entry name" value="ATPase_NBD"/>
</dbReference>
<dbReference type="PANTHER" id="PTHR11937">
    <property type="entry name" value="ACTIN"/>
    <property type="match status" value="1"/>
</dbReference>
<dbReference type="Pfam" id="PF00022">
    <property type="entry name" value="Actin"/>
    <property type="match status" value="1"/>
</dbReference>
<dbReference type="SMART" id="SM00268">
    <property type="entry name" value="ACTIN"/>
    <property type="match status" value="1"/>
</dbReference>
<dbReference type="SUPFAM" id="SSF53067">
    <property type="entry name" value="Actin-like ATPase domain"/>
    <property type="match status" value="2"/>
</dbReference>
<evidence type="ECO:0000269" key="1">
    <source>
    </source>
</evidence>
<evidence type="ECO:0000269" key="2">
    <source>
    </source>
</evidence>
<evidence type="ECO:0000269" key="3">
    <source>
    </source>
</evidence>
<evidence type="ECO:0000269" key="4">
    <source>
    </source>
</evidence>
<evidence type="ECO:0000303" key="5">
    <source>
    </source>
</evidence>
<evidence type="ECO:0000305" key="6"/>
<evidence type="ECO:0000305" key="7">
    <source>
    </source>
</evidence>
<evidence type="ECO:0000312" key="8">
    <source>
        <dbReference type="EMBL" id="HCZ87444.1"/>
    </source>
</evidence>
<evidence type="ECO:0000312" key="9">
    <source>
        <dbReference type="Proteomes" id="UP000008227"/>
    </source>
</evidence>
<evidence type="ECO:0007744" key="10">
    <source>
        <dbReference type="PDB" id="5ADX"/>
    </source>
</evidence>
<evidence type="ECO:0007744" key="11">
    <source>
        <dbReference type="PDB" id="5AFU"/>
    </source>
</evidence>
<evidence type="ECO:0007744" key="12">
    <source>
        <dbReference type="PDB" id="5NW4"/>
    </source>
</evidence>
<evidence type="ECO:0007744" key="13">
    <source>
        <dbReference type="PDB" id="6F1T"/>
    </source>
</evidence>
<evidence type="ECO:0007744" key="14">
    <source>
        <dbReference type="PDB" id="6F38"/>
    </source>
</evidence>
<evidence type="ECO:0007744" key="15">
    <source>
        <dbReference type="PDB" id="6ZNL"/>
    </source>
</evidence>
<evidence type="ECO:0007744" key="16">
    <source>
        <dbReference type="PDB" id="6ZNM"/>
    </source>
</evidence>
<evidence type="ECO:0007744" key="17">
    <source>
        <dbReference type="PDB" id="7Z8F"/>
    </source>
</evidence>
<evidence type="ECO:0007744" key="18">
    <source>
        <dbReference type="PDB" id="7Z8M"/>
    </source>
</evidence>
<evidence type="ECO:0007829" key="19">
    <source>
        <dbReference type="PDB" id="6F1T"/>
    </source>
</evidence>
<evidence type="ECO:0007829" key="20">
    <source>
        <dbReference type="PDB" id="7Z8M"/>
    </source>
</evidence>
<evidence type="ECO:0007829" key="21">
    <source>
        <dbReference type="PDB" id="8PR4"/>
    </source>
</evidence>
<reference evidence="9" key="1">
    <citation type="submission" date="2009-11" db="EMBL/GenBank/DDBJ databases">
        <authorList>
            <consortium name="Porcine genome sequencing project"/>
        </authorList>
    </citation>
    <scope>NUCLEOTIDE SEQUENCE [LARGE SCALE GENOMIC DNA]</scope>
    <source>
        <strain evidence="9">Duroc</strain>
    </source>
</reference>
<reference evidence="8" key="2">
    <citation type="journal article" date="2019" name="PeerJ">
        <title>Genes of the pig, Sus scrofa, reconstructed with EvidentialGene.</title>
        <authorList>
            <person name="Gilbert D.G."/>
        </authorList>
    </citation>
    <scope>NUCLEOTIDE SEQUENCE [MRNA]</scope>
</reference>
<reference evidence="10 11" key="3">
    <citation type="journal article" date="2015" name="Science">
        <title>The structure of the dynactin complex and its interaction with dynein.</title>
        <authorList>
            <person name="Urnavicius L."/>
            <person name="Zhang K."/>
            <person name="Diamant A.G."/>
            <person name="Motz C."/>
            <person name="Schlager M.A."/>
            <person name="Yu M."/>
            <person name="Patel N.A."/>
            <person name="Robinson C.V."/>
            <person name="Carter A.P."/>
        </authorList>
    </citation>
    <scope>STRUCTURE BY ELECTRON MICROSCOPY (4.00 ANGSTROMS) OF 1-71 AND 1-20</scope>
</reference>
<reference evidence="12" key="4">
    <citation type="journal article" date="2017" name="Cell">
        <title>Cryo-EM Reveals How Human Cytoplasmic Dynein Is Auto-inhibited and Activated.</title>
        <authorList>
            <person name="Zhang K."/>
            <person name="Foster H.E."/>
            <person name="Rondelet A."/>
            <person name="Lacey S.E."/>
            <person name="Bahi-Buisson N."/>
            <person name="Bird A.W."/>
            <person name="Carter A.P."/>
        </authorList>
    </citation>
    <scope>STRUCTURE BY ELECTRON MICROSCOPY (8.70 ANGSTROMS) OF 1-71 AND 1-20</scope>
</reference>
<reference evidence="13 14" key="5">
    <citation type="journal article" date="2018" name="Nature">
        <title>Cryo-EM shows how dynactin recruits two dyneins for faster movement.</title>
        <authorList>
            <person name="Urnavicius L."/>
            <person name="Lau C.K."/>
            <person name="Elshenawy M.M."/>
            <person name="Morales-Rios E."/>
            <person name="Motz C."/>
            <person name="Yildiz A."/>
            <person name="Carter A.P."/>
        </authorList>
    </citation>
    <scope>STRUCTURE BY ELECTRON MICROSCOPY (3.50 ANGSTROMS) OF 1-390</scope>
</reference>
<reference evidence="15 16" key="6">
    <citation type="journal article" date="2021" name="EMBO J.">
        <title>Cryo-EM reveals the complex architecture of dynactin's shoulder region and pointed end.</title>
        <authorList>
            <person name="Lau C.K."/>
            <person name="O'Reilly F.J."/>
            <person name="Santhanam B."/>
            <person name="Lacey S.E."/>
            <person name="Rappsilber J."/>
            <person name="Carter A.P."/>
        </authorList>
    </citation>
    <scope>STRUCTURE BY ELECTRON MICROSCOPY (3.80 ANGSTROMS)</scope>
</reference>
<reference evidence="17 18" key="7">
    <citation type="journal article" date="2022" name="Nature">
        <title>Structure of dynein-dynactin on microtubules shows tandem adaptor binding.</title>
        <authorList>
            <person name="Chaaban S."/>
            <person name="Carter A.P."/>
        </authorList>
    </citation>
    <scope>STRUCTURE BY ELECTRON MICROSCOPY (3.37 ANGSTROMS)</scope>
</reference>
<organism evidence="9">
    <name type="scientific">Sus scrofa</name>
    <name type="common">Pig</name>
    <dbReference type="NCBI Taxonomy" id="9823"/>
    <lineage>
        <taxon>Eukaryota</taxon>
        <taxon>Metazoa</taxon>
        <taxon>Chordata</taxon>
        <taxon>Craniata</taxon>
        <taxon>Vertebrata</taxon>
        <taxon>Euteleostomi</taxon>
        <taxon>Mammalia</taxon>
        <taxon>Eutheria</taxon>
        <taxon>Laurasiatheria</taxon>
        <taxon>Artiodactyla</taxon>
        <taxon>Suina</taxon>
        <taxon>Suidae</taxon>
        <taxon>Sus</taxon>
    </lineage>
</organism>
<accession>I3LHK5</accession>
<protein>
    <recommendedName>
        <fullName>Actin-related protein 10</fullName>
    </recommendedName>
</protein>
<gene>
    <name type="primary">ACTR10</name>
    <name evidence="5" type="synonym">ARP11</name>
</gene>
<comment type="function">
    <text evidence="3 4">Part of the dynactin complex that activates the molecular motor dynein for ultra-processive transport along microtubules.</text>
</comment>
<comment type="subunit">
    <text evidence="1 2 3 4">Subunit of dynactin, a multiprotein complex part of a tripartite complex with dynein and a adapter, such as BICDL1, BICD2 or HOOK3. The dynactin complex is built around ACTR1A/ACTB filament and consists of an actin-related filament composed of a shoulder domain, a pointed end and a barbed end. Its length is defined by its flexible shoulder domain. The soulder is composed of 2 DCTN1 subunits, 4 DCTN2 and 2 DCTN3. The 4 DCNT2 (via N-terminus) bind the ACTR1A filament and act as molecular rulers to determine the length. The pointed end is important for binding dynein-dynactin cargo adapters. Consists of 4 subunits: ACTR10, DCNT4, DCTN5 and DCTN6 (PubMed:33734450, PubMed:36071160). The barbed end is composed of a CAPZA1:CAPZB heterodimers, which binds ACTR1A/ACTB filament and dynactin and stabilizes dynactin (PubMed:25814576, PubMed:29420470, PubMed:33734450, PubMed:36071160).</text>
</comment>
<comment type="subcellular location">
    <subcellularLocation>
        <location evidence="7">Cytoplasm</location>
        <location evidence="7">Cytoskeleton</location>
    </subcellularLocation>
</comment>
<comment type="similarity">
    <text evidence="6">Belongs to the actin family.</text>
</comment>
<sequence>MPLYEGLGSGGEKTAVVIDLGEAFTKCGFAGETGPRCIIPSVIKKAGMPKPIKVVQYNINTEELYSYLKEFIHILYFRHLLVNPRDRRVVVIESVLCPSHFRETLTRVLFKYFEVPSVLLAPSHLMALLTLGINSAMVLDCGYRESLVLPIYEGIPVLNCWGALPLGGKALHKELETQLLEQCTVDTGAAKEQSLPSVMGSIPEGVLEDIKVRTCFVSDLTRGLKIQAAKFNIDGNTERPSPPPNVDYPLDGEKILHVLGSIRDSVVEILFEQDNEEKSVATLILDSLMQCPIDTRKQLAENLVIIGGTSMLPGFLHRLLAEIRYLVEKPKYKKTLGTKTFRIHTPPAKANCVAWLGGAIFGALQDILGSRSVSKEYYNQTGRIPDWCSLNNPPLEMVFDVGKSQPPLMKRAFSTEK</sequence>
<feature type="chain" id="PRO_0000457468" description="Actin-related protein 10">
    <location>
        <begin position="1"/>
        <end position="417"/>
    </location>
</feature>
<feature type="strand" evidence="20">
    <location>
        <begin position="16"/>
        <end position="19"/>
    </location>
</feature>
<feature type="strand" evidence="20">
    <location>
        <begin position="22"/>
        <end position="31"/>
    </location>
</feature>
<feature type="strand" evidence="21">
    <location>
        <begin position="32"/>
        <end position="34"/>
    </location>
</feature>
<feature type="strand" evidence="20">
    <location>
        <begin position="36"/>
        <end position="43"/>
    </location>
</feature>
<feature type="strand" evidence="20">
    <location>
        <begin position="52"/>
        <end position="55"/>
    </location>
</feature>
<feature type="strand" evidence="20">
    <location>
        <begin position="57"/>
        <end position="59"/>
    </location>
</feature>
<feature type="helix" evidence="20">
    <location>
        <begin position="61"/>
        <end position="78"/>
    </location>
</feature>
<feature type="turn" evidence="20">
    <location>
        <begin position="84"/>
        <end position="86"/>
    </location>
</feature>
<feature type="strand" evidence="20">
    <location>
        <begin position="89"/>
        <end position="93"/>
    </location>
</feature>
<feature type="helix" evidence="20">
    <location>
        <begin position="99"/>
        <end position="111"/>
    </location>
</feature>
<feature type="strand" evidence="20">
    <location>
        <begin position="116"/>
        <end position="122"/>
    </location>
</feature>
<feature type="helix" evidence="20">
    <location>
        <begin position="123"/>
        <end position="131"/>
    </location>
</feature>
<feature type="strand" evidence="20">
    <location>
        <begin position="134"/>
        <end position="141"/>
    </location>
</feature>
<feature type="strand" evidence="20">
    <location>
        <begin position="146"/>
        <end position="152"/>
    </location>
</feature>
<feature type="helix" evidence="20">
    <location>
        <begin position="158"/>
        <end position="160"/>
    </location>
</feature>
<feature type="strand" evidence="20">
    <location>
        <begin position="162"/>
        <end position="165"/>
    </location>
</feature>
<feature type="helix" evidence="20">
    <location>
        <begin position="168"/>
        <end position="181"/>
    </location>
</feature>
<feature type="strand" evidence="20">
    <location>
        <begin position="188"/>
        <end position="190"/>
    </location>
</feature>
<feature type="strand" evidence="20">
    <location>
        <begin position="198"/>
        <end position="201"/>
    </location>
</feature>
<feature type="helix" evidence="20">
    <location>
        <begin position="204"/>
        <end position="213"/>
    </location>
</feature>
<feature type="helix" evidence="20">
    <location>
        <begin position="220"/>
        <end position="231"/>
    </location>
</feature>
<feature type="strand" evidence="20">
    <location>
        <begin position="246"/>
        <end position="250"/>
    </location>
</feature>
<feature type="turn" evidence="20">
    <location>
        <begin position="251"/>
        <end position="253"/>
    </location>
</feature>
<feature type="strand" evidence="20">
    <location>
        <begin position="254"/>
        <end position="258"/>
    </location>
</feature>
<feature type="helix" evidence="20">
    <location>
        <begin position="260"/>
        <end position="265"/>
    </location>
</feature>
<feature type="helix" evidence="20">
    <location>
        <begin position="268"/>
        <end position="271"/>
    </location>
</feature>
<feature type="turn" evidence="20">
    <location>
        <begin position="274"/>
        <end position="277"/>
    </location>
</feature>
<feature type="helix" evidence="20">
    <location>
        <begin position="280"/>
        <end position="289"/>
    </location>
</feature>
<feature type="turn" evidence="20">
    <location>
        <begin position="293"/>
        <end position="295"/>
    </location>
</feature>
<feature type="helix" evidence="20">
    <location>
        <begin position="296"/>
        <end position="301"/>
    </location>
</feature>
<feature type="strand" evidence="20">
    <location>
        <begin position="303"/>
        <end position="307"/>
    </location>
</feature>
<feature type="helix" evidence="20">
    <location>
        <begin position="308"/>
        <end position="311"/>
    </location>
</feature>
<feature type="helix" evidence="20">
    <location>
        <begin position="315"/>
        <end position="327"/>
    </location>
</feature>
<feature type="helix" evidence="20">
    <location>
        <begin position="330"/>
        <end position="336"/>
    </location>
</feature>
<feature type="helix" evidence="19">
    <location>
        <begin position="350"/>
        <end position="352"/>
    </location>
</feature>
<feature type="helix" evidence="20">
    <location>
        <begin position="353"/>
        <end position="362"/>
    </location>
</feature>
<feature type="helix" evidence="20">
    <location>
        <begin position="365"/>
        <end position="371"/>
    </location>
</feature>
<feature type="strand" evidence="20">
    <location>
        <begin position="372"/>
        <end position="374"/>
    </location>
</feature>
<feature type="helix" evidence="20">
    <location>
        <begin position="375"/>
        <end position="381"/>
    </location>
</feature>
<proteinExistence type="evidence at protein level"/>